<comment type="function">
    <text evidence="1">Located at the top of the head of the 30S subunit, it contacts several helices of the 16S rRNA. In the 70S ribosome it contacts the 23S rRNA (bridge B1a) and protein L5 of the 50S subunit (bridge B1b), connecting the 2 subunits; these bridges are implicated in subunit movement. Contacts the tRNAs in the A and P-sites.</text>
</comment>
<comment type="subunit">
    <text evidence="1">Part of the 30S ribosomal subunit. Forms a loose heterodimer with protein S19. Forms two bridges to the 50S subunit in the 70S ribosome.</text>
</comment>
<comment type="similarity">
    <text evidence="1">Belongs to the universal ribosomal protein uS13 family.</text>
</comment>
<sequence length="118" mass="13256">MARIAGVNIPDNKHTVISLTYIYGVGRTTAQKICADAGVNPAAKIKDLSDEQIETLRGEVAKFTTEGDLRRDINMKIKRLMDLGCYRGLRHRKGLPVRGQRTKTNARTRKGPRKPIRK</sequence>
<proteinExistence type="inferred from homology"/>
<accession>Q1IFU4</accession>
<protein>
    <recommendedName>
        <fullName evidence="1">Small ribosomal subunit protein uS13</fullName>
    </recommendedName>
    <alternativeName>
        <fullName evidence="3">30S ribosomal protein S13</fullName>
    </alternativeName>
</protein>
<feature type="chain" id="PRO_0000306681" description="Small ribosomal subunit protein uS13">
    <location>
        <begin position="1"/>
        <end position="118"/>
    </location>
</feature>
<feature type="region of interest" description="Disordered" evidence="2">
    <location>
        <begin position="92"/>
        <end position="118"/>
    </location>
</feature>
<keyword id="KW-0687">Ribonucleoprotein</keyword>
<keyword id="KW-0689">Ribosomal protein</keyword>
<keyword id="KW-0694">RNA-binding</keyword>
<keyword id="KW-0699">rRNA-binding</keyword>
<keyword id="KW-0820">tRNA-binding</keyword>
<reference key="1">
    <citation type="journal article" date="2006" name="Nat. Biotechnol.">
        <title>Complete genome sequence of the entomopathogenic and metabolically versatile soil bacterium Pseudomonas entomophila.</title>
        <authorList>
            <person name="Vodovar N."/>
            <person name="Vallenet D."/>
            <person name="Cruveiller S."/>
            <person name="Rouy Z."/>
            <person name="Barbe V."/>
            <person name="Acosta C."/>
            <person name="Cattolico L."/>
            <person name="Jubin C."/>
            <person name="Lajus A."/>
            <person name="Segurens B."/>
            <person name="Vacherie B."/>
            <person name="Wincker P."/>
            <person name="Weissenbach J."/>
            <person name="Lemaitre B."/>
            <person name="Medigue C."/>
            <person name="Boccard F."/>
        </authorList>
    </citation>
    <scope>NUCLEOTIDE SEQUENCE [LARGE SCALE GENOMIC DNA]</scope>
    <source>
        <strain>L48</strain>
    </source>
</reference>
<gene>
    <name evidence="1" type="primary">rpsM</name>
    <name type="ordered locus">PSEEN0511</name>
</gene>
<name>RS13_PSEE4</name>
<organism>
    <name type="scientific">Pseudomonas entomophila (strain L48)</name>
    <dbReference type="NCBI Taxonomy" id="384676"/>
    <lineage>
        <taxon>Bacteria</taxon>
        <taxon>Pseudomonadati</taxon>
        <taxon>Pseudomonadota</taxon>
        <taxon>Gammaproteobacteria</taxon>
        <taxon>Pseudomonadales</taxon>
        <taxon>Pseudomonadaceae</taxon>
        <taxon>Pseudomonas</taxon>
    </lineage>
</organism>
<evidence type="ECO:0000255" key="1">
    <source>
        <dbReference type="HAMAP-Rule" id="MF_01315"/>
    </source>
</evidence>
<evidence type="ECO:0000256" key="2">
    <source>
        <dbReference type="SAM" id="MobiDB-lite"/>
    </source>
</evidence>
<evidence type="ECO:0000305" key="3"/>
<dbReference type="EMBL" id="CT573326">
    <property type="protein sequence ID" value="CAK13458.1"/>
    <property type="molecule type" value="Genomic_DNA"/>
</dbReference>
<dbReference type="RefSeq" id="WP_003255457.1">
    <property type="nucleotide sequence ID" value="NC_008027.1"/>
</dbReference>
<dbReference type="SMR" id="Q1IFU4"/>
<dbReference type="STRING" id="384676.PSEEN0511"/>
<dbReference type="GeneID" id="93675544"/>
<dbReference type="KEGG" id="pen:PSEEN0511"/>
<dbReference type="eggNOG" id="COG0099">
    <property type="taxonomic scope" value="Bacteria"/>
</dbReference>
<dbReference type="HOGENOM" id="CLU_103849_1_2_6"/>
<dbReference type="OrthoDB" id="9803610at2"/>
<dbReference type="Proteomes" id="UP000000658">
    <property type="component" value="Chromosome"/>
</dbReference>
<dbReference type="GO" id="GO:0005829">
    <property type="term" value="C:cytosol"/>
    <property type="evidence" value="ECO:0007669"/>
    <property type="project" value="TreeGrafter"/>
</dbReference>
<dbReference type="GO" id="GO:0015935">
    <property type="term" value="C:small ribosomal subunit"/>
    <property type="evidence" value="ECO:0007669"/>
    <property type="project" value="TreeGrafter"/>
</dbReference>
<dbReference type="GO" id="GO:0019843">
    <property type="term" value="F:rRNA binding"/>
    <property type="evidence" value="ECO:0007669"/>
    <property type="project" value="UniProtKB-UniRule"/>
</dbReference>
<dbReference type="GO" id="GO:0003735">
    <property type="term" value="F:structural constituent of ribosome"/>
    <property type="evidence" value="ECO:0007669"/>
    <property type="project" value="InterPro"/>
</dbReference>
<dbReference type="GO" id="GO:0000049">
    <property type="term" value="F:tRNA binding"/>
    <property type="evidence" value="ECO:0007669"/>
    <property type="project" value="UniProtKB-UniRule"/>
</dbReference>
<dbReference type="GO" id="GO:0006412">
    <property type="term" value="P:translation"/>
    <property type="evidence" value="ECO:0007669"/>
    <property type="project" value="UniProtKB-UniRule"/>
</dbReference>
<dbReference type="FunFam" id="1.10.8.50:FF:000001">
    <property type="entry name" value="30S ribosomal protein S13"/>
    <property type="match status" value="1"/>
</dbReference>
<dbReference type="FunFam" id="4.10.910.10:FF:000001">
    <property type="entry name" value="30S ribosomal protein S13"/>
    <property type="match status" value="1"/>
</dbReference>
<dbReference type="Gene3D" id="1.10.8.50">
    <property type="match status" value="1"/>
</dbReference>
<dbReference type="Gene3D" id="4.10.910.10">
    <property type="entry name" value="30s ribosomal protein s13, domain 2"/>
    <property type="match status" value="1"/>
</dbReference>
<dbReference type="HAMAP" id="MF_01315">
    <property type="entry name" value="Ribosomal_uS13"/>
    <property type="match status" value="1"/>
</dbReference>
<dbReference type="InterPro" id="IPR027437">
    <property type="entry name" value="Rbsml_uS13_C"/>
</dbReference>
<dbReference type="InterPro" id="IPR001892">
    <property type="entry name" value="Ribosomal_uS13"/>
</dbReference>
<dbReference type="InterPro" id="IPR010979">
    <property type="entry name" value="Ribosomal_uS13-like_H2TH"/>
</dbReference>
<dbReference type="InterPro" id="IPR019980">
    <property type="entry name" value="Ribosomal_uS13_bac-type"/>
</dbReference>
<dbReference type="InterPro" id="IPR018269">
    <property type="entry name" value="Ribosomal_uS13_CS"/>
</dbReference>
<dbReference type="NCBIfam" id="TIGR03631">
    <property type="entry name" value="uS13_bact"/>
    <property type="match status" value="1"/>
</dbReference>
<dbReference type="PANTHER" id="PTHR10871">
    <property type="entry name" value="30S RIBOSOMAL PROTEIN S13/40S RIBOSOMAL PROTEIN S18"/>
    <property type="match status" value="1"/>
</dbReference>
<dbReference type="PANTHER" id="PTHR10871:SF1">
    <property type="entry name" value="SMALL RIBOSOMAL SUBUNIT PROTEIN US13M"/>
    <property type="match status" value="1"/>
</dbReference>
<dbReference type="Pfam" id="PF00416">
    <property type="entry name" value="Ribosomal_S13"/>
    <property type="match status" value="1"/>
</dbReference>
<dbReference type="PIRSF" id="PIRSF002134">
    <property type="entry name" value="Ribosomal_S13"/>
    <property type="match status" value="1"/>
</dbReference>
<dbReference type="SUPFAM" id="SSF46946">
    <property type="entry name" value="S13-like H2TH domain"/>
    <property type="match status" value="1"/>
</dbReference>
<dbReference type="PROSITE" id="PS00646">
    <property type="entry name" value="RIBOSOMAL_S13_1"/>
    <property type="match status" value="1"/>
</dbReference>
<dbReference type="PROSITE" id="PS50159">
    <property type="entry name" value="RIBOSOMAL_S13_2"/>
    <property type="match status" value="1"/>
</dbReference>